<feature type="signal peptide" evidence="5">
    <location>
        <begin position="1"/>
        <end position="25"/>
    </location>
</feature>
<feature type="chain" id="PRO_0000260343" description="Protein Wnt-2">
    <location>
        <begin position="26"/>
        <end position="360"/>
    </location>
</feature>
<feature type="lipid moiety-binding region" description="O-palmitoleoyl serine; by PORCN" evidence="4">
    <location>
        <position position="212"/>
    </location>
</feature>
<feature type="glycosylation site" description="N-linked (GlcNAc...) asparagine" evidence="5">
    <location>
        <position position="295"/>
    </location>
</feature>
<feature type="disulfide bond" evidence="3">
    <location>
        <begin position="76"/>
        <end position="87"/>
    </location>
</feature>
<feature type="disulfide bond" evidence="3">
    <location>
        <begin position="127"/>
        <end position="135"/>
    </location>
</feature>
<feature type="disulfide bond" evidence="3">
    <location>
        <begin position="137"/>
        <end position="157"/>
    </location>
</feature>
<feature type="disulfide bond" evidence="3">
    <location>
        <begin position="206"/>
        <end position="220"/>
    </location>
</feature>
<feature type="disulfide bond" evidence="3">
    <location>
        <begin position="208"/>
        <end position="215"/>
    </location>
</feature>
<feature type="disulfide bond" evidence="3">
    <location>
        <begin position="278"/>
        <end position="309"/>
    </location>
</feature>
<feature type="disulfide bond" evidence="3">
    <location>
        <begin position="294"/>
        <end position="304"/>
    </location>
</feature>
<feature type="disulfide bond" evidence="3">
    <location>
        <begin position="308"/>
        <end position="348"/>
    </location>
</feature>
<feature type="disulfide bond" evidence="3">
    <location>
        <begin position="324"/>
        <end position="339"/>
    </location>
</feature>
<feature type="disulfide bond" evidence="3">
    <location>
        <begin position="326"/>
        <end position="336"/>
    </location>
</feature>
<feature type="disulfide bond" evidence="3">
    <location>
        <begin position="331"/>
        <end position="332"/>
    </location>
</feature>
<accession>Q07DW8</accession>
<proteinExistence type="inferred from homology"/>
<name>WNT2_MUNRE</name>
<protein>
    <recommendedName>
        <fullName>Protein Wnt-2</fullName>
    </recommendedName>
</protein>
<keyword id="KW-0217">Developmental protein</keyword>
<keyword id="KW-1015">Disulfide bond</keyword>
<keyword id="KW-0272">Extracellular matrix</keyword>
<keyword id="KW-0325">Glycoprotein</keyword>
<keyword id="KW-0449">Lipoprotein</keyword>
<keyword id="KW-0964">Secreted</keyword>
<keyword id="KW-0732">Signal</keyword>
<keyword id="KW-0879">Wnt signaling pathway</keyword>
<organism>
    <name type="scientific">Muntiacus reevesi</name>
    <name type="common">Reeves' muntjac</name>
    <name type="synonym">Cervus reevesi</name>
    <dbReference type="NCBI Taxonomy" id="9886"/>
    <lineage>
        <taxon>Eukaryota</taxon>
        <taxon>Metazoa</taxon>
        <taxon>Chordata</taxon>
        <taxon>Craniata</taxon>
        <taxon>Vertebrata</taxon>
        <taxon>Euteleostomi</taxon>
        <taxon>Mammalia</taxon>
        <taxon>Eutheria</taxon>
        <taxon>Laurasiatheria</taxon>
        <taxon>Artiodactyla</taxon>
        <taxon>Ruminantia</taxon>
        <taxon>Pecora</taxon>
        <taxon>Cervidae</taxon>
        <taxon>Muntiacinae</taxon>
        <taxon>Muntiacus</taxon>
    </lineage>
</organism>
<dbReference type="EMBL" id="DP000195">
    <property type="protein sequence ID" value="ABJ08874.1"/>
    <property type="molecule type" value="Genomic_DNA"/>
</dbReference>
<dbReference type="RefSeq" id="XP_065795051.1">
    <property type="nucleotide sequence ID" value="XM_065938979.1"/>
</dbReference>
<dbReference type="SMR" id="Q07DW8"/>
<dbReference type="GlyCosmos" id="Q07DW8">
    <property type="glycosylation" value="1 site, No reported glycans"/>
</dbReference>
<dbReference type="GeneID" id="136170624"/>
<dbReference type="GO" id="GO:0005615">
    <property type="term" value="C:extracellular space"/>
    <property type="evidence" value="ECO:0007669"/>
    <property type="project" value="TreeGrafter"/>
</dbReference>
<dbReference type="GO" id="GO:0005125">
    <property type="term" value="F:cytokine activity"/>
    <property type="evidence" value="ECO:0007669"/>
    <property type="project" value="TreeGrafter"/>
</dbReference>
<dbReference type="GO" id="GO:0005109">
    <property type="term" value="F:frizzled binding"/>
    <property type="evidence" value="ECO:0007669"/>
    <property type="project" value="TreeGrafter"/>
</dbReference>
<dbReference type="GO" id="GO:0048513">
    <property type="term" value="P:animal organ development"/>
    <property type="evidence" value="ECO:0007669"/>
    <property type="project" value="UniProtKB-ARBA"/>
</dbReference>
<dbReference type="GO" id="GO:0060070">
    <property type="term" value="P:canonical Wnt signaling pathway"/>
    <property type="evidence" value="ECO:0007669"/>
    <property type="project" value="TreeGrafter"/>
</dbReference>
<dbReference type="GO" id="GO:0045165">
    <property type="term" value="P:cell fate commitment"/>
    <property type="evidence" value="ECO:0007669"/>
    <property type="project" value="TreeGrafter"/>
</dbReference>
<dbReference type="GO" id="GO:0030182">
    <property type="term" value="P:neuron differentiation"/>
    <property type="evidence" value="ECO:0007669"/>
    <property type="project" value="TreeGrafter"/>
</dbReference>
<dbReference type="CDD" id="cd19345">
    <property type="entry name" value="Wnt_Wnt2"/>
    <property type="match status" value="1"/>
</dbReference>
<dbReference type="FunFam" id="3.30.2460.20:FF:000001">
    <property type="entry name" value="Wnt homolog"/>
    <property type="match status" value="1"/>
</dbReference>
<dbReference type="Gene3D" id="3.30.2460.20">
    <property type="match status" value="1"/>
</dbReference>
<dbReference type="InterPro" id="IPR005817">
    <property type="entry name" value="Wnt"/>
</dbReference>
<dbReference type="InterPro" id="IPR009140">
    <property type="entry name" value="Wnt2"/>
</dbReference>
<dbReference type="InterPro" id="IPR043158">
    <property type="entry name" value="Wnt_C"/>
</dbReference>
<dbReference type="InterPro" id="IPR018161">
    <property type="entry name" value="Wnt_CS"/>
</dbReference>
<dbReference type="PANTHER" id="PTHR12027:SF86">
    <property type="entry name" value="PROTEIN WNT-2"/>
    <property type="match status" value="1"/>
</dbReference>
<dbReference type="PANTHER" id="PTHR12027">
    <property type="entry name" value="WNT RELATED"/>
    <property type="match status" value="1"/>
</dbReference>
<dbReference type="Pfam" id="PF00110">
    <property type="entry name" value="wnt"/>
    <property type="match status" value="1"/>
</dbReference>
<dbReference type="PRINTS" id="PR01842">
    <property type="entry name" value="WNT2PROTEIN"/>
</dbReference>
<dbReference type="PRINTS" id="PR01349">
    <property type="entry name" value="WNTPROTEIN"/>
</dbReference>
<dbReference type="SMART" id="SM00097">
    <property type="entry name" value="WNT1"/>
    <property type="match status" value="1"/>
</dbReference>
<dbReference type="PROSITE" id="PS00246">
    <property type="entry name" value="WNT1"/>
    <property type="match status" value="1"/>
</dbReference>
<gene>
    <name type="primary">WNT2</name>
</gene>
<reference key="1">
    <citation type="submission" date="2006-09" db="EMBL/GenBank/DDBJ databases">
        <title>NISC comparative sequencing initiative.</title>
        <authorList>
            <person name="Antonellis A."/>
            <person name="Ayele K."/>
            <person name="Benjamin B."/>
            <person name="Blakesley R.W."/>
            <person name="Boakye A."/>
            <person name="Bouffard G.G."/>
            <person name="Brinkley C."/>
            <person name="Brooks S."/>
            <person name="Chu G."/>
            <person name="Coleman H."/>
            <person name="Engle J."/>
            <person name="Gestole M."/>
            <person name="Greene A."/>
            <person name="Guan X."/>
            <person name="Gupta J."/>
            <person name="Haghighi P."/>
            <person name="Han J."/>
            <person name="Hansen N."/>
            <person name="Ho S.-L."/>
            <person name="Hu P."/>
            <person name="Hunter G."/>
            <person name="Hurle B."/>
            <person name="Idol J.R."/>
            <person name="Kwong P."/>
            <person name="Laric P."/>
            <person name="Larson S."/>
            <person name="Lee-Lin S.-Q."/>
            <person name="Legaspi R."/>
            <person name="Madden M."/>
            <person name="Maduro Q.L."/>
            <person name="Maduro V.B."/>
            <person name="Margulies E.H."/>
            <person name="Masiello C."/>
            <person name="Maskeri B."/>
            <person name="McDowell J."/>
            <person name="Mojidi H.A."/>
            <person name="Mullikin J.C."/>
            <person name="Oestreicher J.S."/>
            <person name="Park M."/>
            <person name="Portnoy M.E."/>
            <person name="Prasad A."/>
            <person name="Puri O."/>
            <person name="Reddix-Dugue N."/>
            <person name="Schandler K."/>
            <person name="Schueler M.G."/>
            <person name="Sison C."/>
            <person name="Stantripop S."/>
            <person name="Stephen E."/>
            <person name="Taye A."/>
            <person name="Thomas J.W."/>
            <person name="Thomas P.J."/>
            <person name="Tsipouri V."/>
            <person name="Ung L."/>
            <person name="Vogt J.L."/>
            <person name="Wetherby K.D."/>
            <person name="Young A."/>
            <person name="Green E.D."/>
        </authorList>
    </citation>
    <scope>NUCLEOTIDE SEQUENCE [LARGE SCALE GENOMIC DNA]</scope>
</reference>
<comment type="function">
    <text evidence="1">Ligand for members of the frizzled family of seven transmembrane receptors. Probable developmental protein. May be a signaling molecule which affects the development of discrete regions of tissues. Is likely to signal over only few cell diameters (By similarity).</text>
</comment>
<comment type="subcellular location">
    <subcellularLocation>
        <location evidence="1">Secreted</location>
        <location evidence="1">Extracellular space</location>
        <location evidence="1">Extracellular matrix</location>
    </subcellularLocation>
</comment>
<comment type="PTM">
    <text evidence="2 4">Palmitoleoylation is required for efficient binding to frizzled receptors. Depalmitoleoylation leads to Wnt signaling pathway inhibition.</text>
</comment>
<comment type="similarity">
    <text evidence="6">Belongs to the Wnt family.</text>
</comment>
<sequence length="360" mass="40643">MNACLVGIWLWLPLLFTWLSPEVSSSWWYMRATSGSSRVMCDNVPGLVSHQRQLCHRHPDVMRAIGLGVTEWTMECQHQFRQHRWNCNTLDRDHSLFGRVLLRSSRESAFVYAISSAGVVFAITRACSQGELKSCSCDPKKKGTAKDNKGTFDWGGCSDNIDYGIKFARAFVDAKERKGKDARALMNLHNNRAGRKAVKRFLKQECKCHGVSGSCTLRTCWLAMADFRKTGNYLWRKYNGAIQVVMNQDGTGFTVANKRFKKPTKNDLVYFENSPDYCIRDRDAGSLGTAGRVCNLTSRGMDSCEVMCCGRGYDTSHITRKTKCECKFHWCCAVRCQDCVEALDVHTCKAPKSPDWAAPT</sequence>
<evidence type="ECO:0000250" key="1"/>
<evidence type="ECO:0000250" key="2">
    <source>
        <dbReference type="UniProtKB" id="P27467"/>
    </source>
</evidence>
<evidence type="ECO:0000250" key="3">
    <source>
        <dbReference type="UniProtKB" id="P28026"/>
    </source>
</evidence>
<evidence type="ECO:0000250" key="4">
    <source>
        <dbReference type="UniProtKB" id="P56704"/>
    </source>
</evidence>
<evidence type="ECO:0000255" key="5"/>
<evidence type="ECO:0000305" key="6"/>